<proteinExistence type="inferred from homology"/>
<comment type="catalytic activity">
    <reaction evidence="2">
        <text>D-glyceraldehyde 3-phosphate + phosphate + NAD(+) = (2R)-3-phospho-glyceroyl phosphate + NADH + H(+)</text>
        <dbReference type="Rhea" id="RHEA:10300"/>
        <dbReference type="ChEBI" id="CHEBI:15378"/>
        <dbReference type="ChEBI" id="CHEBI:43474"/>
        <dbReference type="ChEBI" id="CHEBI:57540"/>
        <dbReference type="ChEBI" id="CHEBI:57604"/>
        <dbReference type="ChEBI" id="CHEBI:57945"/>
        <dbReference type="ChEBI" id="CHEBI:59776"/>
        <dbReference type="EC" id="1.2.1.12"/>
    </reaction>
</comment>
<comment type="pathway">
    <text>Carbohydrate degradation; glycolysis; pyruvate from D-glyceraldehyde 3-phosphate: step 1/5.</text>
</comment>
<comment type="subunit">
    <text>Homotetramer.</text>
</comment>
<comment type="subcellular location">
    <subcellularLocation>
        <location>Cytoplasm</location>
    </subcellularLocation>
</comment>
<comment type="similarity">
    <text evidence="3">Belongs to the glyceraldehyde-3-phosphate dehydrogenase family.</text>
</comment>
<protein>
    <recommendedName>
        <fullName>Glyceraldehyde-3-phosphate dehydrogenase 2</fullName>
        <shortName>GAPDH 2</shortName>
        <ecNumber>1.2.1.12</ecNumber>
    </recommendedName>
</protein>
<keyword id="KW-0963">Cytoplasm</keyword>
<keyword id="KW-0324">Glycolysis</keyword>
<keyword id="KW-0520">NAD</keyword>
<keyword id="KW-0560">Oxidoreductase</keyword>
<feature type="chain" id="PRO_0000145534" description="Glyceraldehyde-3-phosphate dehydrogenase 2">
    <location>
        <begin position="1"/>
        <end position="338"/>
    </location>
</feature>
<feature type="active site" description="Nucleophile" evidence="2">
    <location>
        <position position="150"/>
    </location>
</feature>
<feature type="binding site" evidence="1">
    <location>
        <begin position="11"/>
        <end position="12"/>
    </location>
    <ligand>
        <name>NAD(+)</name>
        <dbReference type="ChEBI" id="CHEBI:57540"/>
    </ligand>
</feature>
<feature type="binding site" evidence="1">
    <location>
        <position position="33"/>
    </location>
    <ligand>
        <name>NAD(+)</name>
        <dbReference type="ChEBI" id="CHEBI:57540"/>
    </ligand>
</feature>
<feature type="binding site" evidence="1">
    <location>
        <position position="78"/>
    </location>
    <ligand>
        <name>NAD(+)</name>
        <dbReference type="ChEBI" id="CHEBI:57540"/>
    </ligand>
</feature>
<feature type="binding site" evidence="1">
    <location>
        <begin position="149"/>
        <end position="151"/>
    </location>
    <ligand>
        <name>D-glyceraldehyde 3-phosphate</name>
        <dbReference type="ChEBI" id="CHEBI:59776"/>
    </ligand>
</feature>
<feature type="binding site" evidence="1">
    <location>
        <position position="180"/>
    </location>
    <ligand>
        <name>D-glyceraldehyde 3-phosphate</name>
        <dbReference type="ChEBI" id="CHEBI:59776"/>
    </ligand>
</feature>
<feature type="binding site" evidence="1">
    <location>
        <begin position="209"/>
        <end position="210"/>
    </location>
    <ligand>
        <name>D-glyceraldehyde 3-phosphate</name>
        <dbReference type="ChEBI" id="CHEBI:59776"/>
    </ligand>
</feature>
<feature type="binding site" evidence="1">
    <location>
        <position position="232"/>
    </location>
    <ligand>
        <name>D-glyceraldehyde 3-phosphate</name>
        <dbReference type="ChEBI" id="CHEBI:59776"/>
    </ligand>
</feature>
<feature type="binding site" evidence="1">
    <location>
        <position position="314"/>
    </location>
    <ligand>
        <name>NAD(+)</name>
        <dbReference type="ChEBI" id="CHEBI:57540"/>
    </ligand>
</feature>
<feature type="site" description="Activates thiol group during catalysis" evidence="1">
    <location>
        <position position="177"/>
    </location>
</feature>
<dbReference type="EC" id="1.2.1.12"/>
<dbReference type="EMBL" id="M81728">
    <property type="protein sequence ID" value="AAA32634.1"/>
    <property type="molecule type" value="Genomic_DNA"/>
</dbReference>
<dbReference type="PIR" id="S26976">
    <property type="entry name" value="S26976"/>
</dbReference>
<dbReference type="SMR" id="P32636"/>
<dbReference type="UniPathway" id="UPA00109">
    <property type="reaction ID" value="UER00184"/>
</dbReference>
<dbReference type="GO" id="GO:0005829">
    <property type="term" value="C:cytosol"/>
    <property type="evidence" value="ECO:0007669"/>
    <property type="project" value="TreeGrafter"/>
</dbReference>
<dbReference type="GO" id="GO:0004365">
    <property type="term" value="F:glyceraldehyde-3-phosphate dehydrogenase (NAD+) (phosphorylating) activity"/>
    <property type="evidence" value="ECO:0007669"/>
    <property type="project" value="UniProtKB-EC"/>
</dbReference>
<dbReference type="GO" id="GO:0051287">
    <property type="term" value="F:NAD binding"/>
    <property type="evidence" value="ECO:0007669"/>
    <property type="project" value="InterPro"/>
</dbReference>
<dbReference type="GO" id="GO:0050661">
    <property type="term" value="F:NADP binding"/>
    <property type="evidence" value="ECO:0007669"/>
    <property type="project" value="InterPro"/>
</dbReference>
<dbReference type="GO" id="GO:0006006">
    <property type="term" value="P:glucose metabolic process"/>
    <property type="evidence" value="ECO:0007669"/>
    <property type="project" value="InterPro"/>
</dbReference>
<dbReference type="GO" id="GO:0006096">
    <property type="term" value="P:glycolytic process"/>
    <property type="evidence" value="ECO:0007669"/>
    <property type="project" value="UniProtKB-UniPathway"/>
</dbReference>
<dbReference type="CDD" id="cd18126">
    <property type="entry name" value="GAPDH_I_C"/>
    <property type="match status" value="1"/>
</dbReference>
<dbReference type="CDD" id="cd05214">
    <property type="entry name" value="GAPDH_I_N"/>
    <property type="match status" value="1"/>
</dbReference>
<dbReference type="FunFam" id="3.30.360.10:FF:000001">
    <property type="entry name" value="Glyceraldehyde-3-phosphate dehydrogenase"/>
    <property type="match status" value="1"/>
</dbReference>
<dbReference type="FunFam" id="3.40.50.720:FF:000266">
    <property type="entry name" value="Glyceraldehyde-3-phosphate dehydrogenase"/>
    <property type="match status" value="1"/>
</dbReference>
<dbReference type="Gene3D" id="3.30.360.10">
    <property type="entry name" value="Dihydrodipicolinate Reductase, domain 2"/>
    <property type="match status" value="1"/>
</dbReference>
<dbReference type="Gene3D" id="3.40.50.720">
    <property type="entry name" value="NAD(P)-binding Rossmann-like Domain"/>
    <property type="match status" value="1"/>
</dbReference>
<dbReference type="InterPro" id="IPR020831">
    <property type="entry name" value="GlycerAld/Erythrose_P_DH"/>
</dbReference>
<dbReference type="InterPro" id="IPR020830">
    <property type="entry name" value="GlycerAld_3-P_DH_AS"/>
</dbReference>
<dbReference type="InterPro" id="IPR020829">
    <property type="entry name" value="GlycerAld_3-P_DH_cat"/>
</dbReference>
<dbReference type="InterPro" id="IPR020828">
    <property type="entry name" value="GlycerAld_3-P_DH_NAD(P)-bd"/>
</dbReference>
<dbReference type="InterPro" id="IPR006424">
    <property type="entry name" value="Glyceraldehyde-3-P_DH_1"/>
</dbReference>
<dbReference type="InterPro" id="IPR036291">
    <property type="entry name" value="NAD(P)-bd_dom_sf"/>
</dbReference>
<dbReference type="NCBIfam" id="TIGR01534">
    <property type="entry name" value="GAPDH-I"/>
    <property type="match status" value="1"/>
</dbReference>
<dbReference type="PANTHER" id="PTHR10836">
    <property type="entry name" value="GLYCERALDEHYDE 3-PHOSPHATE DEHYDROGENASE"/>
    <property type="match status" value="1"/>
</dbReference>
<dbReference type="PANTHER" id="PTHR10836:SF76">
    <property type="entry name" value="GLYCERALDEHYDE-3-PHOSPHATE DEHYDROGENASE-RELATED"/>
    <property type="match status" value="1"/>
</dbReference>
<dbReference type="Pfam" id="PF02800">
    <property type="entry name" value="Gp_dh_C"/>
    <property type="match status" value="1"/>
</dbReference>
<dbReference type="Pfam" id="PF00044">
    <property type="entry name" value="Gp_dh_N"/>
    <property type="match status" value="1"/>
</dbReference>
<dbReference type="PIRSF" id="PIRSF000149">
    <property type="entry name" value="GAP_DH"/>
    <property type="match status" value="1"/>
</dbReference>
<dbReference type="PRINTS" id="PR00078">
    <property type="entry name" value="G3PDHDRGNASE"/>
</dbReference>
<dbReference type="SMART" id="SM00846">
    <property type="entry name" value="Gp_dh_N"/>
    <property type="match status" value="1"/>
</dbReference>
<dbReference type="SUPFAM" id="SSF55347">
    <property type="entry name" value="Glyceraldehyde-3-phosphate dehydrogenase-like, C-terminal domain"/>
    <property type="match status" value="1"/>
</dbReference>
<dbReference type="SUPFAM" id="SSF51735">
    <property type="entry name" value="NAD(P)-binding Rossmann-fold domains"/>
    <property type="match status" value="1"/>
</dbReference>
<dbReference type="PROSITE" id="PS00071">
    <property type="entry name" value="GAPDH"/>
    <property type="match status" value="1"/>
</dbReference>
<gene>
    <name type="primary">gpd2</name>
</gene>
<evidence type="ECO:0000250" key="1"/>
<evidence type="ECO:0000255" key="2">
    <source>
        <dbReference type="PROSITE-ProRule" id="PRU10009"/>
    </source>
</evidence>
<evidence type="ECO:0000305" key="3"/>
<sequence>MVKVGINGFGRIGRIVLRNALQFQDIEVVAVNDPFIDLEYMAYMFKYDSVHGRFKGTVEVKNGSFVVDGRPMKVFAERDPAAIPWGSVGADYVVESTGVFTTIDKASAHLKGGAKKVVISAPSADAPMYVCGVNLDKYNPKDTIISNASCTTNCLATLAKVIHDNFGIVEGLMTTVHATTATQKTVDGPSHKDWRGGRGVGNNIIPSSTGAAKAVGKVIPSLNGKLTGLSMRVPTQDVSVVDLVVRLEKPASYEQIKEVMRKAAEGEYKGIIAYTDEDVVSTDFISDNNSCVFDAKAGIQLSPNFVKLIAWYDNEWGYSRRVCNLLQYVAKEDAKAGI</sequence>
<accession>P32636</accession>
<reference key="1">
    <citation type="journal article" date="1992" name="Curr. Genet.">
        <title>Sequence analysis of the glyceraldehyde-3-phosphate dehydrogenase genes from the basidiomycetes Schizophyllum commune, Phanerochaete chrysosporium and Agaricus bisporus.</title>
        <authorList>
            <person name="Harmsen M.C."/>
            <person name="Schuren F.H.J."/>
            <person name="Moukha S.M."/>
            <person name="van Zuilen C.M."/>
            <person name="Punt P.J."/>
            <person name="Wessels J.G.H."/>
        </authorList>
    </citation>
    <scope>NUCLEOTIDE SEQUENCE [GENOMIC DNA]</scope>
    <source>
        <strain>Horst U3</strain>
    </source>
</reference>
<name>G3P2_AGABI</name>
<organism>
    <name type="scientific">Agaricus bisporus</name>
    <name type="common">White button mushroom</name>
    <dbReference type="NCBI Taxonomy" id="5341"/>
    <lineage>
        <taxon>Eukaryota</taxon>
        <taxon>Fungi</taxon>
        <taxon>Dikarya</taxon>
        <taxon>Basidiomycota</taxon>
        <taxon>Agaricomycotina</taxon>
        <taxon>Agaricomycetes</taxon>
        <taxon>Agaricomycetidae</taxon>
        <taxon>Agaricales</taxon>
        <taxon>Agaricineae</taxon>
        <taxon>Agaricaceae</taxon>
        <taxon>Agaricus</taxon>
    </lineage>
</organism>